<evidence type="ECO:0000250" key="1">
    <source>
        <dbReference type="UniProtKB" id="P58405"/>
    </source>
</evidence>
<evidence type="ECO:0000250" key="2">
    <source>
        <dbReference type="UniProtKB" id="Q13033"/>
    </source>
</evidence>
<evidence type="ECO:0000255" key="3"/>
<evidence type="ECO:0000256" key="4">
    <source>
        <dbReference type="SAM" id="MobiDB-lite"/>
    </source>
</evidence>
<evidence type="ECO:0000269" key="5">
    <source>
    </source>
</evidence>
<evidence type="ECO:0000305" key="6"/>
<evidence type="ECO:0007744" key="7">
    <source>
    </source>
</evidence>
<evidence type="ECO:0007744" key="8">
    <source>
    </source>
</evidence>
<accession>Q9ERG2</accession>
<keyword id="KW-0007">Acetylation</keyword>
<keyword id="KW-0112">Calmodulin-binding</keyword>
<keyword id="KW-0175">Coiled coil</keyword>
<keyword id="KW-0963">Cytoplasm</keyword>
<keyword id="KW-0472">Membrane</keyword>
<keyword id="KW-0597">Phosphoprotein</keyword>
<keyword id="KW-1185">Reference proteome</keyword>
<keyword id="KW-0677">Repeat</keyword>
<keyword id="KW-0853">WD repeat</keyword>
<dbReference type="EMBL" id="AF307777">
    <property type="protein sequence ID" value="AAG24454.1"/>
    <property type="molecule type" value="mRNA"/>
</dbReference>
<dbReference type="CCDS" id="CCDS36440.1"/>
<dbReference type="RefSeq" id="NP_443205.1">
    <property type="nucleotide sequence ID" value="NM_052973.2"/>
</dbReference>
<dbReference type="SMR" id="Q9ERG2"/>
<dbReference type="BioGRID" id="220464">
    <property type="interactions" value="77"/>
</dbReference>
<dbReference type="FunCoup" id="Q9ERG2">
    <property type="interactions" value="3425"/>
</dbReference>
<dbReference type="IntAct" id="Q9ERG2">
    <property type="interactions" value="48"/>
</dbReference>
<dbReference type="STRING" id="10090.ENSMUSP00000013130"/>
<dbReference type="GlyGen" id="Q9ERG2">
    <property type="glycosylation" value="1 site, 1 N-linked glycan (1 site)"/>
</dbReference>
<dbReference type="iPTMnet" id="Q9ERG2"/>
<dbReference type="PhosphoSitePlus" id="Q9ERG2"/>
<dbReference type="SwissPalm" id="Q9ERG2"/>
<dbReference type="jPOST" id="Q9ERG2"/>
<dbReference type="PaxDb" id="10090-ENSMUSP00000013130"/>
<dbReference type="PeptideAtlas" id="Q9ERG2"/>
<dbReference type="ProteomicsDB" id="257464"/>
<dbReference type="Pumba" id="Q9ERG2"/>
<dbReference type="Antibodypedia" id="176">
    <property type="antibodies" value="129 antibodies from 23 providers"/>
</dbReference>
<dbReference type="DNASU" id="94186"/>
<dbReference type="Ensembl" id="ENSMUST00000013130.15">
    <property type="protein sequence ID" value="ENSMUSP00000013130.9"/>
    <property type="gene ID" value="ENSMUSG00000020954.17"/>
</dbReference>
<dbReference type="GeneID" id="94186"/>
<dbReference type="KEGG" id="mmu:94186"/>
<dbReference type="UCSC" id="uc007nmt.2">
    <property type="organism name" value="mouse"/>
</dbReference>
<dbReference type="AGR" id="MGI:2151064"/>
<dbReference type="CTD" id="29966"/>
<dbReference type="MGI" id="MGI:2151064">
    <property type="gene designation" value="Strn3"/>
</dbReference>
<dbReference type="VEuPathDB" id="HostDB:ENSMUSG00000020954"/>
<dbReference type="eggNOG" id="KOG0642">
    <property type="taxonomic scope" value="Eukaryota"/>
</dbReference>
<dbReference type="GeneTree" id="ENSGT00950000183095"/>
<dbReference type="InParanoid" id="Q9ERG2"/>
<dbReference type="OMA" id="SKCSQEV"/>
<dbReference type="OrthoDB" id="727118at2759"/>
<dbReference type="PhylomeDB" id="Q9ERG2"/>
<dbReference type="TreeFam" id="TF313387"/>
<dbReference type="BioGRID-ORCS" id="94186">
    <property type="hits" value="4 hits in 81 CRISPR screens"/>
</dbReference>
<dbReference type="CD-CODE" id="CE726F99">
    <property type="entry name" value="Postsynaptic density"/>
</dbReference>
<dbReference type="ChiTaRS" id="Strn3">
    <property type="organism name" value="mouse"/>
</dbReference>
<dbReference type="PRO" id="PR:Q9ERG2"/>
<dbReference type="Proteomes" id="UP000000589">
    <property type="component" value="Chromosome 12"/>
</dbReference>
<dbReference type="RNAct" id="Q9ERG2">
    <property type="molecule type" value="protein"/>
</dbReference>
<dbReference type="Bgee" id="ENSMUSG00000020954">
    <property type="expression patterns" value="Expressed in dorsal pancreas and 246 other cell types or tissues"/>
</dbReference>
<dbReference type="ExpressionAtlas" id="Q9ERG2">
    <property type="expression patterns" value="baseline and differential"/>
</dbReference>
<dbReference type="GO" id="GO:0030425">
    <property type="term" value="C:dendrite"/>
    <property type="evidence" value="ECO:0007669"/>
    <property type="project" value="Ensembl"/>
</dbReference>
<dbReference type="GO" id="GO:0090443">
    <property type="term" value="C:FAR/SIN/STRIPAK complex"/>
    <property type="evidence" value="ECO:0000250"/>
    <property type="project" value="UniProtKB"/>
</dbReference>
<dbReference type="GO" id="GO:0005794">
    <property type="term" value="C:Golgi apparatus"/>
    <property type="evidence" value="ECO:0007669"/>
    <property type="project" value="Ensembl"/>
</dbReference>
<dbReference type="GO" id="GO:0043025">
    <property type="term" value="C:neuronal cell body"/>
    <property type="evidence" value="ECO:0007669"/>
    <property type="project" value="Ensembl"/>
</dbReference>
<dbReference type="GO" id="GO:0005654">
    <property type="term" value="C:nucleoplasm"/>
    <property type="evidence" value="ECO:0007669"/>
    <property type="project" value="Ensembl"/>
</dbReference>
<dbReference type="GO" id="GO:0005886">
    <property type="term" value="C:plasma membrane"/>
    <property type="evidence" value="ECO:0007669"/>
    <property type="project" value="Ensembl"/>
</dbReference>
<dbReference type="GO" id="GO:0098794">
    <property type="term" value="C:postsynapse"/>
    <property type="evidence" value="ECO:0000314"/>
    <property type="project" value="SynGO"/>
</dbReference>
<dbReference type="GO" id="GO:0070016">
    <property type="term" value="F:armadillo repeat domain binding"/>
    <property type="evidence" value="ECO:0007669"/>
    <property type="project" value="Ensembl"/>
</dbReference>
<dbReference type="GO" id="GO:0005516">
    <property type="term" value="F:calmodulin binding"/>
    <property type="evidence" value="ECO:0007669"/>
    <property type="project" value="UniProtKB-KW"/>
</dbReference>
<dbReference type="GO" id="GO:0051721">
    <property type="term" value="F:protein phosphatase 2A binding"/>
    <property type="evidence" value="ECO:0007669"/>
    <property type="project" value="Ensembl"/>
</dbReference>
<dbReference type="GO" id="GO:0044877">
    <property type="term" value="F:protein-containing complex binding"/>
    <property type="evidence" value="ECO:0007669"/>
    <property type="project" value="Ensembl"/>
</dbReference>
<dbReference type="GO" id="GO:0030674">
    <property type="term" value="F:protein-macromolecule adaptor activity"/>
    <property type="evidence" value="ECO:0000250"/>
    <property type="project" value="UniProtKB"/>
</dbReference>
<dbReference type="GO" id="GO:0031267">
    <property type="term" value="F:small GTPase binding"/>
    <property type="evidence" value="ECO:0007669"/>
    <property type="project" value="Ensembl"/>
</dbReference>
<dbReference type="GO" id="GO:0045892">
    <property type="term" value="P:negative regulation of DNA-templated transcription"/>
    <property type="evidence" value="ECO:0007669"/>
    <property type="project" value="Ensembl"/>
</dbReference>
<dbReference type="GO" id="GO:0035331">
    <property type="term" value="P:negative regulation of hippo signaling"/>
    <property type="evidence" value="ECO:0000250"/>
    <property type="project" value="UniProtKB"/>
</dbReference>
<dbReference type="GO" id="GO:0033147">
    <property type="term" value="P:negative regulation of intracellular estrogen receptor signaling pathway"/>
    <property type="evidence" value="ECO:0007669"/>
    <property type="project" value="Ensembl"/>
</dbReference>
<dbReference type="GO" id="GO:0032355">
    <property type="term" value="P:response to estradiol"/>
    <property type="evidence" value="ECO:0007669"/>
    <property type="project" value="Ensembl"/>
</dbReference>
<dbReference type="CDD" id="cd00200">
    <property type="entry name" value="WD40"/>
    <property type="match status" value="1"/>
</dbReference>
<dbReference type="FunFam" id="1.20.5.300:FF:000001">
    <property type="entry name" value="striatin isoform X1"/>
    <property type="match status" value="1"/>
</dbReference>
<dbReference type="FunFam" id="2.130.10.10:FF:000616">
    <property type="entry name" value="Striatin-3 isoform B"/>
    <property type="match status" value="1"/>
</dbReference>
<dbReference type="FunFam" id="2.130.10.10:FF:000110">
    <property type="entry name" value="striatin-3 isoform X2"/>
    <property type="match status" value="1"/>
</dbReference>
<dbReference type="FunFam" id="2.130.10.10:FF:000134">
    <property type="entry name" value="striatin-3 isoform X2"/>
    <property type="match status" value="1"/>
</dbReference>
<dbReference type="Gene3D" id="1.20.5.300">
    <property type="match status" value="1"/>
</dbReference>
<dbReference type="Gene3D" id="2.130.10.10">
    <property type="entry name" value="YVTN repeat-like/Quinoprotein amine dehydrogenase"/>
    <property type="match status" value="3"/>
</dbReference>
<dbReference type="InterPro" id="IPR020472">
    <property type="entry name" value="G-protein_beta_WD-40_rep"/>
</dbReference>
<dbReference type="InterPro" id="IPR013258">
    <property type="entry name" value="Striatin_N"/>
</dbReference>
<dbReference type="InterPro" id="IPR015943">
    <property type="entry name" value="WD40/YVTN_repeat-like_dom_sf"/>
</dbReference>
<dbReference type="InterPro" id="IPR019775">
    <property type="entry name" value="WD40_repeat_CS"/>
</dbReference>
<dbReference type="InterPro" id="IPR036322">
    <property type="entry name" value="WD40_repeat_dom_sf"/>
</dbReference>
<dbReference type="InterPro" id="IPR001680">
    <property type="entry name" value="WD40_rpt"/>
</dbReference>
<dbReference type="InterPro" id="IPR051488">
    <property type="entry name" value="WD_repeat_striatin"/>
</dbReference>
<dbReference type="PANTHER" id="PTHR15653">
    <property type="entry name" value="STRIATIN"/>
    <property type="match status" value="1"/>
</dbReference>
<dbReference type="PANTHER" id="PTHR15653:SF3">
    <property type="entry name" value="STRIATIN-3"/>
    <property type="match status" value="1"/>
</dbReference>
<dbReference type="Pfam" id="PF08232">
    <property type="entry name" value="Striatin"/>
    <property type="match status" value="1"/>
</dbReference>
<dbReference type="Pfam" id="PF00400">
    <property type="entry name" value="WD40"/>
    <property type="match status" value="5"/>
</dbReference>
<dbReference type="PRINTS" id="PR00320">
    <property type="entry name" value="GPROTEINBRPT"/>
</dbReference>
<dbReference type="SMART" id="SM00320">
    <property type="entry name" value="WD40"/>
    <property type="match status" value="7"/>
</dbReference>
<dbReference type="SUPFAM" id="SSF50978">
    <property type="entry name" value="WD40 repeat-like"/>
    <property type="match status" value="1"/>
</dbReference>
<dbReference type="PROSITE" id="PS00678">
    <property type="entry name" value="WD_REPEATS_1"/>
    <property type="match status" value="2"/>
</dbReference>
<dbReference type="PROSITE" id="PS50082">
    <property type="entry name" value="WD_REPEATS_2"/>
    <property type="match status" value="4"/>
</dbReference>
<dbReference type="PROSITE" id="PS50294">
    <property type="entry name" value="WD_REPEATS_REGION"/>
    <property type="match status" value="1"/>
</dbReference>
<reference key="1">
    <citation type="submission" date="2000-09" db="EMBL/GenBank/DDBJ databases">
        <title>Expression analysis of SG2NA isoform.</title>
        <authorList>
            <person name="Castets F."/>
            <person name="Rakitina T."/>
        </authorList>
    </citation>
    <scope>NUCLEOTIDE SEQUENCE [MRNA]</scope>
</reference>
<reference key="2">
    <citation type="journal article" date="2000" name="J. Biol. Chem.">
        <title>Zinedin, SG2NA, and striatin are calmodulin-binding, WD repeat proteins principally expressed in the brain.</title>
        <authorList>
            <person name="Castets F."/>
            <person name="Rakitina T."/>
            <person name="Gaillard S."/>
            <person name="Moqrich A."/>
            <person name="Mattei M.-G."/>
            <person name="Monneron A."/>
        </authorList>
    </citation>
    <scope>TISSUE SPECIFICITY</scope>
</reference>
<reference key="3">
    <citation type="journal article" date="2009" name="Immunity">
        <title>The phagosomal proteome in interferon-gamma-activated macrophages.</title>
        <authorList>
            <person name="Trost M."/>
            <person name="English L."/>
            <person name="Lemieux S."/>
            <person name="Courcelles M."/>
            <person name="Desjardins M."/>
            <person name="Thibault P."/>
        </authorList>
    </citation>
    <scope>PHOSPHORYLATION [LARGE SCALE ANALYSIS] AT SER-229</scope>
    <scope>IDENTIFICATION BY MASS SPECTROMETRY [LARGE SCALE ANALYSIS]</scope>
</reference>
<reference key="4">
    <citation type="journal article" date="2010" name="Cell">
        <title>A tissue-specific atlas of mouse protein phosphorylation and expression.</title>
        <authorList>
            <person name="Huttlin E.L."/>
            <person name="Jedrychowski M.P."/>
            <person name="Elias J.E."/>
            <person name="Goswami T."/>
            <person name="Rad R."/>
            <person name="Beausoleil S.A."/>
            <person name="Villen J."/>
            <person name="Haas W."/>
            <person name="Sowa M.E."/>
            <person name="Gygi S.P."/>
        </authorList>
    </citation>
    <scope>PHOSPHORYLATION [LARGE SCALE ANALYSIS] AT SER-202; SER-229; SER-257 AND SER-334</scope>
    <scope>IDENTIFICATION BY MASS SPECTROMETRY [LARGE SCALE ANALYSIS]</scope>
    <source>
        <tissue>Brain</tissue>
        <tissue>Brown adipose tissue</tissue>
        <tissue>Heart</tissue>
        <tissue>Kidney</tissue>
        <tissue>Liver</tissue>
        <tissue>Lung</tissue>
        <tissue>Pancreas</tissue>
        <tissue>Spleen</tissue>
        <tissue>Testis</tissue>
    </source>
</reference>
<sequence>MDELAGGGGGGQGMAAPPRPQQGPGGNLSLPPGANGAPGGGGPPAAEAAGPPAGPELSRPQQYTIPGILHYIQHEWARFEMERAHWEVERAELQARIAFLQGERKGQENLKKDLVRRIKMLEYALKQERAKYHKLKYGTELNQGDLKMPTFESEETKDVEAPPAPQNSQLTWKQGRQLLRQYLQEVGYTDTILDVRSQRVRSLLGLSNSEPNGSVEAKNLEQILNGGESPKQKGQEIKRPPGDVLETFNFLENADDSDEEENDMIEGIPEGKDKLRIHKHKIGNEGLAADLTDDPDTEEALKEFDFLVTAEDGEGAGEARSSGDGTEWDKDDLSPTAEVWDVDQGLISKLKEQYKKERKGKKGVKRVNRTNLCDMITDLGDDELPHIPSGIINQSRSASTRMADHEGARAEEAEPITFPSGGGKSFIMGSDDVLLSVLGLGDLADLTVTNDADYSYDLPANKDAFRKTWNPKYTLRSHFDGVRALAFHPVEPVLVTASEDHTLKLWNLQKTVPAKKSASLDVEPIYTFRAHIGPVLSLAISSNGEQCFSGGIDATIQWWNMPSPNVDPYDTYESNVLAGTLVAHTDAVWGLAYSGIKNQLLSCSADGTIRLWNPQEKLPCVCTYNGDKEHGIPTSVDFIGCDPAHMVTSFNTGSAVIYDLETSQSLVMLSSQVDSGLQSSNHINRVVSHPTLPVTITAHEDRHIKFFDNKTGKMIHSMVAHLDAVTSLAVDPNGIYLMSGSHDCSIRLWNLDSKTCVQEITAHRKKLDESIYDVAFHPSKAYIASAGADALAKVFV</sequence>
<feature type="chain" id="PRO_0000051237" description="Striatin-3">
    <location>
        <begin position="1"/>
        <end position="796"/>
    </location>
</feature>
<feature type="repeat" description="WD 1">
    <location>
        <begin position="477"/>
        <end position="516"/>
    </location>
</feature>
<feature type="repeat" description="WD 2">
    <location>
        <begin position="530"/>
        <end position="569"/>
    </location>
</feature>
<feature type="repeat" description="WD 3">
    <location>
        <begin position="583"/>
        <end position="622"/>
    </location>
</feature>
<feature type="repeat" description="WD 4">
    <location>
        <begin position="678"/>
        <end position="717"/>
    </location>
</feature>
<feature type="repeat" description="WD 5">
    <location>
        <begin position="720"/>
        <end position="759"/>
    </location>
</feature>
<feature type="repeat" description="WD 6">
    <location>
        <begin position="766"/>
        <end position="795"/>
    </location>
</feature>
<feature type="region of interest" description="Disordered" evidence="4">
    <location>
        <begin position="1"/>
        <end position="60"/>
    </location>
</feature>
<feature type="region of interest" description="Caveolin-binding" evidence="3">
    <location>
        <begin position="71"/>
        <end position="79"/>
    </location>
</feature>
<feature type="region of interest" description="Calmodulin-binding" evidence="3">
    <location>
        <begin position="166"/>
        <end position="183"/>
    </location>
</feature>
<feature type="region of interest" description="Disordered" evidence="4">
    <location>
        <begin position="252"/>
        <end position="271"/>
    </location>
</feature>
<feature type="region of interest" description="Disordered" evidence="4">
    <location>
        <begin position="311"/>
        <end position="335"/>
    </location>
</feature>
<feature type="coiled-coil region" evidence="3">
    <location>
        <begin position="77"/>
        <end position="136"/>
    </location>
</feature>
<feature type="compositionally biased region" description="Gly residues" evidence="4">
    <location>
        <begin position="1"/>
        <end position="13"/>
    </location>
</feature>
<feature type="compositionally biased region" description="Acidic residues" evidence="4">
    <location>
        <begin position="253"/>
        <end position="264"/>
    </location>
</feature>
<feature type="modified residue" description="N-acetylmethionine" evidence="2">
    <location>
        <position position="1"/>
    </location>
</feature>
<feature type="modified residue" description="Phosphothreonine" evidence="1">
    <location>
        <position position="150"/>
    </location>
</feature>
<feature type="modified residue" description="Phosphoserine" evidence="8">
    <location>
        <position position="202"/>
    </location>
</feature>
<feature type="modified residue" description="Phosphoserine" evidence="2">
    <location>
        <position position="214"/>
    </location>
</feature>
<feature type="modified residue" description="Phosphoserine" evidence="7 8">
    <location>
        <position position="229"/>
    </location>
</feature>
<feature type="modified residue" description="Phosphoserine" evidence="8">
    <location>
        <position position="257"/>
    </location>
</feature>
<feature type="modified residue" description="Phosphoserine" evidence="8">
    <location>
        <position position="334"/>
    </location>
</feature>
<organism>
    <name type="scientific">Mus musculus</name>
    <name type="common">Mouse</name>
    <dbReference type="NCBI Taxonomy" id="10090"/>
    <lineage>
        <taxon>Eukaryota</taxon>
        <taxon>Metazoa</taxon>
        <taxon>Chordata</taxon>
        <taxon>Craniata</taxon>
        <taxon>Vertebrata</taxon>
        <taxon>Euteleostomi</taxon>
        <taxon>Mammalia</taxon>
        <taxon>Eutheria</taxon>
        <taxon>Euarchontoglires</taxon>
        <taxon>Glires</taxon>
        <taxon>Rodentia</taxon>
        <taxon>Myomorpha</taxon>
        <taxon>Muroidea</taxon>
        <taxon>Muridae</taxon>
        <taxon>Murinae</taxon>
        <taxon>Mus</taxon>
        <taxon>Mus</taxon>
    </lineage>
</organism>
<comment type="function">
    <text evidence="2">Calmodulin-binding scaffolding protein which is the center of the striatin-interacting phosphatase and kinase (STRIPAK) complexes. STRIPAK complexes have critical roles in protein (de)phosphorylation and are regulators of multiple signaling pathways including Hippo, MAPK, nuclear receptor and cytoskeleton remodeling. Different types of STRIPAK complexes are involved in a variety of biological processes such as cell growth, differentiation, apoptosis, metabolism and immune regulation.</text>
</comment>
<comment type="subunit">
    <text evidence="2">Tetramerizes. Part of the core of STRIPAK complexes composed of PP2A catalytic and scaffolding subunits, the striatins (PP2A regulatory subunits), the striatin-associated proteins MOB4, STRIP1 and STRIP2, PDCD10 and members of the STE20 kinases, such as STK24 and STK26. The STRIPAK complex can be extended by adapter proteins such as SLMAP:SIKE1 or CTTNBP2NL. Interacts with CDC42BPB.</text>
</comment>
<comment type="subcellular location">
    <subcellularLocation>
        <location>Cytoplasm</location>
    </subcellularLocation>
    <subcellularLocation>
        <location>Membrane</location>
        <topology>Peripheral membrane protein</topology>
    </subcellularLocation>
</comment>
<comment type="tissue specificity">
    <text evidence="5">Mainly expressed in the brain and muscles but is also detected at low levels in various tissues such as kidney, spleen and lung.</text>
</comment>
<comment type="similarity">
    <text evidence="6">Belongs to the WD repeat striatin family.</text>
</comment>
<name>STRN3_MOUSE</name>
<protein>
    <recommendedName>
        <fullName>Striatin-3</fullName>
    </recommendedName>
    <alternativeName>
        <fullName>Cell cycle autoantigen SG2NA</fullName>
    </alternativeName>
    <alternativeName>
        <fullName>S/G2 antigen</fullName>
    </alternativeName>
</protein>
<gene>
    <name type="primary">Strn3</name>
    <name type="synonym">Gs2na</name>
    <name type="synonym">Sg2na</name>
</gene>
<proteinExistence type="evidence at protein level"/>